<sequence length="548" mass="61620">MDSQRNLLVIALLFVSFMIWQAWEQDKNPQPQTQQTTQTTTTAAGSAADQGVPASGQGKMITVKTDVLDLTINTRGGDVEQALLPAYPKELGSNEPFQLLETTPQFIYQAQSGLTGRDGPDNPANGPRPLYNVEKDAFVLADGQNELQVPMTYTDAAGNTFTKTFVFKRGDYAVNVNYSVQNAGEKPLEVSTFGQLKQSVNLPPHRDTGSSNFALHTFRGAAYSTPDEKYEKYKFDTIADNENLNVSSKGGWVAMLQQYFATAWIPRNDGTNNFYTANLGNGIVAIGYKAQPVLVQPGQTGAMTSTLWVGPEIQDKMAAVAPHLDLTVDYGWLWFISQPLFKLLKWIHSFVGNWGFSIIIITFIVRGIMYPLTKAQYTSMAKMRMLQPKIQAMRERLGDDKQRQSQEMMALYKAEKVNPLGGCFPLIIQMPIFLALYYMLMGSIELRHAPFALWIHDLSAQDPYYILPILMGVTMFFIQKMSPTTVTDPMQQKIMTFMPVIFTVFFLWFPSGLVLYYIVSNLVTIIQQQLIYRGLEKRGLHSREKKKS</sequence>
<comment type="function">
    <text evidence="1">Required for the insertion and/or proper folding and/or complex formation of integral membrane proteins into the membrane. Involved in integration of membrane proteins that insert both dependently and independently of the Sec translocase complex, as well as at least some lipoproteins. Aids folding of multispanning membrane proteins.</text>
</comment>
<comment type="subunit">
    <text evidence="1">Interacts with the Sec translocase complex via SecD. Specifically interacts with transmembrane segments of nascent integral membrane proteins during membrane integration.</text>
</comment>
<comment type="subcellular location">
    <subcellularLocation>
        <location evidence="1">Cell inner membrane</location>
        <topology evidence="1">Multi-pass membrane protein</topology>
    </subcellularLocation>
</comment>
<comment type="similarity">
    <text evidence="1">Belongs to the OXA1/ALB3/YidC family. Type 1 subfamily.</text>
</comment>
<reference key="1">
    <citation type="journal article" date="2008" name="Genome Res.">
        <title>Comparative genome analysis of Salmonella enteritidis PT4 and Salmonella gallinarum 287/91 provides insights into evolutionary and host adaptation pathways.</title>
        <authorList>
            <person name="Thomson N.R."/>
            <person name="Clayton D.J."/>
            <person name="Windhorst D."/>
            <person name="Vernikos G."/>
            <person name="Davidson S."/>
            <person name="Churcher C."/>
            <person name="Quail M.A."/>
            <person name="Stevens M."/>
            <person name="Jones M.A."/>
            <person name="Watson M."/>
            <person name="Barron A."/>
            <person name="Layton A."/>
            <person name="Pickard D."/>
            <person name="Kingsley R.A."/>
            <person name="Bignell A."/>
            <person name="Clark L."/>
            <person name="Harris B."/>
            <person name="Ormond D."/>
            <person name="Abdellah Z."/>
            <person name="Brooks K."/>
            <person name="Cherevach I."/>
            <person name="Chillingworth T."/>
            <person name="Woodward J."/>
            <person name="Norberczak H."/>
            <person name="Lord A."/>
            <person name="Arrowsmith C."/>
            <person name="Jagels K."/>
            <person name="Moule S."/>
            <person name="Mungall K."/>
            <person name="Saunders M."/>
            <person name="Whitehead S."/>
            <person name="Chabalgoity J.A."/>
            <person name="Maskell D."/>
            <person name="Humphreys T."/>
            <person name="Roberts M."/>
            <person name="Barrow P.A."/>
            <person name="Dougan G."/>
            <person name="Parkhill J."/>
        </authorList>
    </citation>
    <scope>NUCLEOTIDE SEQUENCE [LARGE SCALE GENOMIC DNA]</scope>
    <source>
        <strain>P125109</strain>
    </source>
</reference>
<keyword id="KW-0997">Cell inner membrane</keyword>
<keyword id="KW-1003">Cell membrane</keyword>
<keyword id="KW-0143">Chaperone</keyword>
<keyword id="KW-0472">Membrane</keyword>
<keyword id="KW-0653">Protein transport</keyword>
<keyword id="KW-0812">Transmembrane</keyword>
<keyword id="KW-1133">Transmembrane helix</keyword>
<keyword id="KW-0813">Transport</keyword>
<accession>B5QUQ4</accession>
<feature type="chain" id="PRO_1000187698" description="Membrane protein insertase YidC">
    <location>
        <begin position="1"/>
        <end position="548"/>
    </location>
</feature>
<feature type="transmembrane region" description="Helical" evidence="1">
    <location>
        <begin position="6"/>
        <end position="26"/>
    </location>
</feature>
<feature type="transmembrane region" description="Helical" evidence="1">
    <location>
        <begin position="350"/>
        <end position="370"/>
    </location>
</feature>
<feature type="transmembrane region" description="Helical" evidence="1">
    <location>
        <begin position="424"/>
        <end position="444"/>
    </location>
</feature>
<feature type="transmembrane region" description="Helical" evidence="1">
    <location>
        <begin position="458"/>
        <end position="478"/>
    </location>
</feature>
<feature type="transmembrane region" description="Helical" evidence="1">
    <location>
        <begin position="499"/>
        <end position="519"/>
    </location>
</feature>
<feature type="region of interest" description="Disordered" evidence="2">
    <location>
        <begin position="28"/>
        <end position="56"/>
    </location>
</feature>
<feature type="compositionally biased region" description="Low complexity" evidence="2">
    <location>
        <begin position="29"/>
        <end position="42"/>
    </location>
</feature>
<name>YIDC_SALEP</name>
<protein>
    <recommendedName>
        <fullName evidence="1">Membrane protein insertase YidC</fullName>
    </recommendedName>
    <alternativeName>
        <fullName evidence="1">Foldase YidC</fullName>
    </alternativeName>
    <alternativeName>
        <fullName evidence="1">Membrane integrase YidC</fullName>
    </alternativeName>
    <alternativeName>
        <fullName evidence="1">Membrane protein YidC</fullName>
    </alternativeName>
</protein>
<organism>
    <name type="scientific">Salmonella enteritidis PT4 (strain P125109)</name>
    <dbReference type="NCBI Taxonomy" id="550537"/>
    <lineage>
        <taxon>Bacteria</taxon>
        <taxon>Pseudomonadati</taxon>
        <taxon>Pseudomonadota</taxon>
        <taxon>Gammaproteobacteria</taxon>
        <taxon>Enterobacterales</taxon>
        <taxon>Enterobacteriaceae</taxon>
        <taxon>Salmonella</taxon>
    </lineage>
</organism>
<gene>
    <name evidence="1" type="primary">yidC</name>
    <name type="ordered locus">SEN3659</name>
</gene>
<dbReference type="EMBL" id="AM933172">
    <property type="protein sequence ID" value="CAR35235.1"/>
    <property type="molecule type" value="Genomic_DNA"/>
</dbReference>
<dbReference type="RefSeq" id="WP_000378277.1">
    <property type="nucleotide sequence ID" value="NC_011294.1"/>
</dbReference>
<dbReference type="SMR" id="B5QUQ4"/>
<dbReference type="KEGG" id="set:SEN3659"/>
<dbReference type="HOGENOM" id="CLU_016535_3_0_6"/>
<dbReference type="Proteomes" id="UP000000613">
    <property type="component" value="Chromosome"/>
</dbReference>
<dbReference type="GO" id="GO:0005886">
    <property type="term" value="C:plasma membrane"/>
    <property type="evidence" value="ECO:0007669"/>
    <property type="project" value="UniProtKB-SubCell"/>
</dbReference>
<dbReference type="GO" id="GO:0032977">
    <property type="term" value="F:membrane insertase activity"/>
    <property type="evidence" value="ECO:0007669"/>
    <property type="project" value="InterPro"/>
</dbReference>
<dbReference type="GO" id="GO:0051205">
    <property type="term" value="P:protein insertion into membrane"/>
    <property type="evidence" value="ECO:0007669"/>
    <property type="project" value="TreeGrafter"/>
</dbReference>
<dbReference type="GO" id="GO:0015031">
    <property type="term" value="P:protein transport"/>
    <property type="evidence" value="ECO:0007669"/>
    <property type="project" value="UniProtKB-KW"/>
</dbReference>
<dbReference type="CDD" id="cd20070">
    <property type="entry name" value="5TM_YidC_Alb3"/>
    <property type="match status" value="1"/>
</dbReference>
<dbReference type="CDD" id="cd19961">
    <property type="entry name" value="EcYidC-like_peri"/>
    <property type="match status" value="1"/>
</dbReference>
<dbReference type="FunFam" id="2.70.98.90:FF:000001">
    <property type="entry name" value="Membrane protein insertase YidC"/>
    <property type="match status" value="1"/>
</dbReference>
<dbReference type="Gene3D" id="2.70.98.90">
    <property type="match status" value="1"/>
</dbReference>
<dbReference type="HAMAP" id="MF_01810">
    <property type="entry name" value="YidC_type1"/>
    <property type="match status" value="1"/>
</dbReference>
<dbReference type="InterPro" id="IPR019998">
    <property type="entry name" value="Membr_insert_YidC"/>
</dbReference>
<dbReference type="InterPro" id="IPR028053">
    <property type="entry name" value="Membr_insert_YidC_N"/>
</dbReference>
<dbReference type="InterPro" id="IPR001708">
    <property type="entry name" value="YidC/ALB3/OXA1/COX18"/>
</dbReference>
<dbReference type="InterPro" id="IPR028055">
    <property type="entry name" value="YidC/Oxa/ALB_C"/>
</dbReference>
<dbReference type="InterPro" id="IPR047196">
    <property type="entry name" value="YidC_ALB_C"/>
</dbReference>
<dbReference type="InterPro" id="IPR038221">
    <property type="entry name" value="YidC_periplasmic_sf"/>
</dbReference>
<dbReference type="NCBIfam" id="NF002351">
    <property type="entry name" value="PRK01318.1-1"/>
    <property type="match status" value="1"/>
</dbReference>
<dbReference type="NCBIfam" id="NF002352">
    <property type="entry name" value="PRK01318.1-3"/>
    <property type="match status" value="1"/>
</dbReference>
<dbReference type="NCBIfam" id="NF002353">
    <property type="entry name" value="PRK01318.1-4"/>
    <property type="match status" value="1"/>
</dbReference>
<dbReference type="NCBIfam" id="TIGR03593">
    <property type="entry name" value="yidC_nterm"/>
    <property type="match status" value="1"/>
</dbReference>
<dbReference type="NCBIfam" id="TIGR03592">
    <property type="entry name" value="yidC_oxa1_cterm"/>
    <property type="match status" value="1"/>
</dbReference>
<dbReference type="PANTHER" id="PTHR12428:SF65">
    <property type="entry name" value="CYTOCHROME C OXIDASE ASSEMBLY PROTEIN COX18, MITOCHONDRIAL"/>
    <property type="match status" value="1"/>
</dbReference>
<dbReference type="PANTHER" id="PTHR12428">
    <property type="entry name" value="OXA1"/>
    <property type="match status" value="1"/>
</dbReference>
<dbReference type="Pfam" id="PF02096">
    <property type="entry name" value="60KD_IMP"/>
    <property type="match status" value="1"/>
</dbReference>
<dbReference type="Pfam" id="PF14849">
    <property type="entry name" value="YidC_periplas"/>
    <property type="match status" value="1"/>
</dbReference>
<dbReference type="PRINTS" id="PR00701">
    <property type="entry name" value="60KDINNERMP"/>
</dbReference>
<dbReference type="PRINTS" id="PR01900">
    <property type="entry name" value="YIDCPROTEIN"/>
</dbReference>
<proteinExistence type="inferred from homology"/>
<evidence type="ECO:0000255" key="1">
    <source>
        <dbReference type="HAMAP-Rule" id="MF_01810"/>
    </source>
</evidence>
<evidence type="ECO:0000256" key="2">
    <source>
        <dbReference type="SAM" id="MobiDB-lite"/>
    </source>
</evidence>